<accession>C0RIN8</accession>
<dbReference type="EC" id="2.3.2.6" evidence="1"/>
<dbReference type="EMBL" id="CP001488">
    <property type="protein sequence ID" value="ACO00696.1"/>
    <property type="molecule type" value="Genomic_DNA"/>
</dbReference>
<dbReference type="SMR" id="C0RIN8"/>
<dbReference type="KEGG" id="bmi:BMEA_A0944"/>
<dbReference type="HOGENOM" id="CLU_075045_1_1_5"/>
<dbReference type="Proteomes" id="UP000001748">
    <property type="component" value="Chromosome I"/>
</dbReference>
<dbReference type="GO" id="GO:0005737">
    <property type="term" value="C:cytoplasm"/>
    <property type="evidence" value="ECO:0007669"/>
    <property type="project" value="UniProtKB-SubCell"/>
</dbReference>
<dbReference type="GO" id="GO:0008914">
    <property type="term" value="F:leucyl-tRNA--protein transferase activity"/>
    <property type="evidence" value="ECO:0007669"/>
    <property type="project" value="UniProtKB-UniRule"/>
</dbReference>
<dbReference type="GO" id="GO:0030163">
    <property type="term" value="P:protein catabolic process"/>
    <property type="evidence" value="ECO:0007669"/>
    <property type="project" value="UniProtKB-UniRule"/>
</dbReference>
<dbReference type="FunFam" id="3.40.630.70:FF:000001">
    <property type="entry name" value="Leucyl/phenylalanyl-tRNA--protein transferase"/>
    <property type="match status" value="1"/>
</dbReference>
<dbReference type="Gene3D" id="3.40.630.70">
    <property type="entry name" value="Leucyl/phenylalanyl-tRNA-protein transferase, C-terminal domain"/>
    <property type="match status" value="1"/>
</dbReference>
<dbReference type="Gene3D" id="3.30.70.3550">
    <property type="entry name" value="Leucyl/phenylalanyl-tRNA-protein transferase, N-terminal domain"/>
    <property type="match status" value="1"/>
</dbReference>
<dbReference type="HAMAP" id="MF_00688">
    <property type="entry name" value="Leu_Phe_trans"/>
    <property type="match status" value="1"/>
</dbReference>
<dbReference type="InterPro" id="IPR016181">
    <property type="entry name" value="Acyl_CoA_acyltransferase"/>
</dbReference>
<dbReference type="InterPro" id="IPR004616">
    <property type="entry name" value="Leu/Phe-tRNA_Trfase"/>
</dbReference>
<dbReference type="InterPro" id="IPR042203">
    <property type="entry name" value="Leu/Phe-tRNA_Trfase_C"/>
</dbReference>
<dbReference type="InterPro" id="IPR042221">
    <property type="entry name" value="Leu/Phe-tRNA_Trfase_N"/>
</dbReference>
<dbReference type="NCBIfam" id="TIGR00667">
    <property type="entry name" value="aat"/>
    <property type="match status" value="1"/>
</dbReference>
<dbReference type="PANTHER" id="PTHR30098">
    <property type="entry name" value="LEUCYL/PHENYLALANYL-TRNA--PROTEIN TRANSFERASE"/>
    <property type="match status" value="1"/>
</dbReference>
<dbReference type="PANTHER" id="PTHR30098:SF2">
    <property type="entry name" value="LEUCYL_PHENYLALANYL-TRNA--PROTEIN TRANSFERASE"/>
    <property type="match status" value="1"/>
</dbReference>
<dbReference type="Pfam" id="PF03588">
    <property type="entry name" value="Leu_Phe_trans"/>
    <property type="match status" value="1"/>
</dbReference>
<dbReference type="SUPFAM" id="SSF55729">
    <property type="entry name" value="Acyl-CoA N-acyltransferases (Nat)"/>
    <property type="match status" value="1"/>
</dbReference>
<feature type="chain" id="PRO_1000147786" description="Leucyl/phenylalanyl-tRNA--protein transferase">
    <location>
        <begin position="1"/>
        <end position="204"/>
    </location>
</feature>
<keyword id="KW-0012">Acyltransferase</keyword>
<keyword id="KW-0963">Cytoplasm</keyword>
<keyword id="KW-0808">Transferase</keyword>
<sequence>MTAEAPPDDDIIEPEMLLRAYATGIFPMAEEADDPEVFWVRPEKRGVIPLDGFHIPRSLQKTIRQGIFEIRLDSNFAGVIEGCASGTGERARTWINEPIRRAYAKLFEIGHCHTVEAWYEGKLAGGLYGVTLGRAFFGESMFTRKRDASKVCLAYLVQHLSRQGFVLLDTQFTTPHLERFGALEVPRKEYEEMLERALEGIARF</sequence>
<evidence type="ECO:0000255" key="1">
    <source>
        <dbReference type="HAMAP-Rule" id="MF_00688"/>
    </source>
</evidence>
<reference key="1">
    <citation type="submission" date="2009-03" db="EMBL/GenBank/DDBJ databases">
        <title>Brucella melitensis ATCC 23457 whole genome shotgun sequencing project.</title>
        <authorList>
            <person name="Setubal J.C."/>
            <person name="Boyle S."/>
            <person name="Crasta O.R."/>
            <person name="Gillespie J.J."/>
            <person name="Kenyon R.W."/>
            <person name="Lu J."/>
            <person name="Mane S."/>
            <person name="Nagrani S."/>
            <person name="Shallom J.M."/>
            <person name="Shallom S."/>
            <person name="Shukla M."/>
            <person name="Snyder E.E."/>
            <person name="Sobral B.W."/>
            <person name="Wattam A.R."/>
            <person name="Will R."/>
            <person name="Williams K."/>
            <person name="Yoo H."/>
            <person name="Munk C."/>
            <person name="Tapia R."/>
            <person name="Han C."/>
            <person name="Detter J.C."/>
            <person name="Bruce D."/>
            <person name="Brettin T.S."/>
        </authorList>
    </citation>
    <scope>NUCLEOTIDE SEQUENCE [LARGE SCALE GENOMIC DNA]</scope>
    <source>
        <strain>ATCC 23457</strain>
    </source>
</reference>
<comment type="function">
    <text evidence="1">Functions in the N-end rule pathway of protein degradation where it conjugates Leu, Phe and, less efficiently, Met from aminoacyl-tRNAs to the N-termini of proteins containing an N-terminal arginine or lysine.</text>
</comment>
<comment type="catalytic activity">
    <reaction evidence="1">
        <text>N-terminal L-lysyl-[protein] + L-leucyl-tRNA(Leu) = N-terminal L-leucyl-L-lysyl-[protein] + tRNA(Leu) + H(+)</text>
        <dbReference type="Rhea" id="RHEA:12340"/>
        <dbReference type="Rhea" id="RHEA-COMP:9613"/>
        <dbReference type="Rhea" id="RHEA-COMP:9622"/>
        <dbReference type="Rhea" id="RHEA-COMP:12670"/>
        <dbReference type="Rhea" id="RHEA-COMP:12671"/>
        <dbReference type="ChEBI" id="CHEBI:15378"/>
        <dbReference type="ChEBI" id="CHEBI:65249"/>
        <dbReference type="ChEBI" id="CHEBI:78442"/>
        <dbReference type="ChEBI" id="CHEBI:78494"/>
        <dbReference type="ChEBI" id="CHEBI:133043"/>
        <dbReference type="EC" id="2.3.2.6"/>
    </reaction>
</comment>
<comment type="catalytic activity">
    <reaction evidence="1">
        <text>N-terminal L-arginyl-[protein] + L-leucyl-tRNA(Leu) = N-terminal L-leucyl-L-arginyl-[protein] + tRNA(Leu) + H(+)</text>
        <dbReference type="Rhea" id="RHEA:50416"/>
        <dbReference type="Rhea" id="RHEA-COMP:9613"/>
        <dbReference type="Rhea" id="RHEA-COMP:9622"/>
        <dbReference type="Rhea" id="RHEA-COMP:12672"/>
        <dbReference type="Rhea" id="RHEA-COMP:12673"/>
        <dbReference type="ChEBI" id="CHEBI:15378"/>
        <dbReference type="ChEBI" id="CHEBI:64719"/>
        <dbReference type="ChEBI" id="CHEBI:78442"/>
        <dbReference type="ChEBI" id="CHEBI:78494"/>
        <dbReference type="ChEBI" id="CHEBI:133044"/>
        <dbReference type="EC" id="2.3.2.6"/>
    </reaction>
</comment>
<comment type="catalytic activity">
    <reaction evidence="1">
        <text>L-phenylalanyl-tRNA(Phe) + an N-terminal L-alpha-aminoacyl-[protein] = an N-terminal L-phenylalanyl-L-alpha-aminoacyl-[protein] + tRNA(Phe)</text>
        <dbReference type="Rhea" id="RHEA:43632"/>
        <dbReference type="Rhea" id="RHEA-COMP:9668"/>
        <dbReference type="Rhea" id="RHEA-COMP:9699"/>
        <dbReference type="Rhea" id="RHEA-COMP:10636"/>
        <dbReference type="Rhea" id="RHEA-COMP:10637"/>
        <dbReference type="ChEBI" id="CHEBI:78442"/>
        <dbReference type="ChEBI" id="CHEBI:78531"/>
        <dbReference type="ChEBI" id="CHEBI:78597"/>
        <dbReference type="ChEBI" id="CHEBI:83561"/>
        <dbReference type="EC" id="2.3.2.6"/>
    </reaction>
</comment>
<comment type="subcellular location">
    <subcellularLocation>
        <location evidence="1">Cytoplasm</location>
    </subcellularLocation>
</comment>
<comment type="similarity">
    <text evidence="1">Belongs to the L/F-transferase family.</text>
</comment>
<organism>
    <name type="scientific">Brucella melitensis biotype 2 (strain ATCC 23457)</name>
    <dbReference type="NCBI Taxonomy" id="546272"/>
    <lineage>
        <taxon>Bacteria</taxon>
        <taxon>Pseudomonadati</taxon>
        <taxon>Pseudomonadota</taxon>
        <taxon>Alphaproteobacteria</taxon>
        <taxon>Hyphomicrobiales</taxon>
        <taxon>Brucellaceae</taxon>
        <taxon>Brucella/Ochrobactrum group</taxon>
        <taxon>Brucella</taxon>
    </lineage>
</organism>
<protein>
    <recommendedName>
        <fullName evidence="1">Leucyl/phenylalanyl-tRNA--protein transferase</fullName>
        <ecNumber evidence="1">2.3.2.6</ecNumber>
    </recommendedName>
    <alternativeName>
        <fullName evidence="1">L/F-transferase</fullName>
    </alternativeName>
    <alternativeName>
        <fullName evidence="1">Leucyltransferase</fullName>
    </alternativeName>
    <alternativeName>
        <fullName evidence="1">Phenyalanyltransferase</fullName>
    </alternativeName>
</protein>
<gene>
    <name evidence="1" type="primary">aat</name>
    <name type="ordered locus">BMEA_A0944</name>
</gene>
<name>LFTR_BRUMB</name>
<proteinExistence type="inferred from homology"/>